<proteinExistence type="evidence at transcript level"/>
<evidence type="ECO:0000250" key="1"/>
<evidence type="ECO:0000250" key="2">
    <source>
        <dbReference type="UniProtKB" id="P61201"/>
    </source>
</evidence>
<evidence type="ECO:0000255" key="3">
    <source>
        <dbReference type="PROSITE-ProRule" id="PRU01185"/>
    </source>
</evidence>
<evidence type="ECO:0000256" key="4">
    <source>
        <dbReference type="SAM" id="MobiDB-lite"/>
    </source>
</evidence>
<evidence type="ECO:0000305" key="5"/>
<protein>
    <recommendedName>
        <fullName>COP9 signalosome complex subunit 2</fullName>
        <shortName>Signalosome subunit 2</shortName>
    </recommendedName>
</protein>
<accession>Q6IR75</accession>
<feature type="chain" id="PRO_0000120972" description="COP9 signalosome complex subunit 2">
    <location>
        <begin position="1" status="less than"/>
        <end position="441"/>
    </location>
</feature>
<feature type="domain" description="PCI" evidence="3">
    <location>
        <begin position="252"/>
        <end position="414"/>
    </location>
</feature>
<feature type="region of interest" description="Disordered" evidence="4">
    <location>
        <begin position="1"/>
        <end position="29"/>
    </location>
</feature>
<feature type="compositionally biased region" description="Acidic residues" evidence="4">
    <location>
        <begin position="1"/>
        <end position="23"/>
    </location>
</feature>
<feature type="non-terminal residue">
    <location>
        <position position="1"/>
    </location>
</feature>
<reference key="1">
    <citation type="submission" date="2004-05" db="EMBL/GenBank/DDBJ databases">
        <authorList>
            <consortium name="NIH - Xenopus Gene Collection (XGC) project"/>
        </authorList>
    </citation>
    <scope>NUCLEOTIDE SEQUENCE [LARGE SCALE MRNA]</scope>
    <source>
        <tissue>Kidney</tissue>
    </source>
</reference>
<keyword id="KW-0963">Cytoplasm</keyword>
<keyword id="KW-0539">Nucleus</keyword>
<keyword id="KW-1185">Reference proteome</keyword>
<keyword id="KW-0736">Signalosome</keyword>
<dbReference type="EMBL" id="BC071025">
    <property type="protein sequence ID" value="AAH71025.1"/>
    <property type="molecule type" value="mRNA"/>
</dbReference>
<dbReference type="SMR" id="Q6IR75"/>
<dbReference type="Proteomes" id="UP000186698">
    <property type="component" value="Unplaced"/>
</dbReference>
<dbReference type="GO" id="GO:0008180">
    <property type="term" value="C:COP9 signalosome"/>
    <property type="evidence" value="ECO:0000318"/>
    <property type="project" value="GO_Central"/>
</dbReference>
<dbReference type="GO" id="GO:0005737">
    <property type="term" value="C:cytoplasm"/>
    <property type="evidence" value="ECO:0007669"/>
    <property type="project" value="UniProtKB-SubCell"/>
</dbReference>
<dbReference type="GO" id="GO:0000338">
    <property type="term" value="P:protein deneddylation"/>
    <property type="evidence" value="ECO:0000318"/>
    <property type="project" value="GO_Central"/>
</dbReference>
<dbReference type="FunFam" id="1.25.40.570:FF:000001">
    <property type="entry name" value="Putative cop9 signalosome complex subunit 2"/>
    <property type="match status" value="1"/>
</dbReference>
<dbReference type="Gene3D" id="1.25.40.570">
    <property type="match status" value="1"/>
</dbReference>
<dbReference type="InterPro" id="IPR050871">
    <property type="entry name" value="26S_Proteasome/COP9_Components"/>
</dbReference>
<dbReference type="InterPro" id="IPR000717">
    <property type="entry name" value="PCI_dom"/>
</dbReference>
<dbReference type="InterPro" id="IPR011990">
    <property type="entry name" value="TPR-like_helical_dom_sf"/>
</dbReference>
<dbReference type="InterPro" id="IPR036390">
    <property type="entry name" value="WH_DNA-bd_sf"/>
</dbReference>
<dbReference type="PANTHER" id="PTHR10678">
    <property type="entry name" value="26S PROTEASOME NON-ATPASE REGULATORY SUBUNIT 11/COP9 SIGNALOSOME COMPLEX SUBUNIT 2"/>
    <property type="match status" value="1"/>
</dbReference>
<dbReference type="Pfam" id="PF01399">
    <property type="entry name" value="PCI"/>
    <property type="match status" value="1"/>
</dbReference>
<dbReference type="SMART" id="SM00753">
    <property type="entry name" value="PAM"/>
    <property type="match status" value="1"/>
</dbReference>
<dbReference type="SMART" id="SM00088">
    <property type="entry name" value="PINT"/>
    <property type="match status" value="1"/>
</dbReference>
<dbReference type="SUPFAM" id="SSF48452">
    <property type="entry name" value="TPR-like"/>
    <property type="match status" value="1"/>
</dbReference>
<dbReference type="SUPFAM" id="SSF46785">
    <property type="entry name" value="Winged helix' DNA-binding domain"/>
    <property type="match status" value="1"/>
</dbReference>
<dbReference type="PROSITE" id="PS50250">
    <property type="entry name" value="PCI"/>
    <property type="match status" value="1"/>
</dbReference>
<name>CSN2_XENLA</name>
<sequence>DMEDDFMCDDEEDYDLEYSEDSNSEPNVDLENQYYNSKALKEDDPKAALSSFQKVLELEGEKGEWGFKALKQMIKINFKLGNYPEMMNRYKQLLTYIRSAVTRNYSEKSINSILDYISTSKQMDLLQEFYETTLDALKDAKNDRLWFKTNTKLGKLYLEREEYGKLQKILRQLHQSCQTDDGEDDLKKGTQLLEIYALEIQMYTAQKNNKKLKALYEQSLHIKSAIPHPLIMGVIRECGGKMHLREGEFEKAHTDFFEAFKNYDESGSPRRTTCLKYLVLANMLMKSGINPFDSQEAKPYKNDPEILAMTNLVSAYQNNDITEFEKILKTNHSNIMDDPFIREHIEELLRNIRTQVLIKLIKPYTRIHIPFISKELNIDVADVESLLVQCILDNTIHGRIDQVNQLLELDHQKRGGARYTALDKWTNQLNSLNQAVVSKLA</sequence>
<organism>
    <name type="scientific">Xenopus laevis</name>
    <name type="common">African clawed frog</name>
    <dbReference type="NCBI Taxonomy" id="8355"/>
    <lineage>
        <taxon>Eukaryota</taxon>
        <taxon>Metazoa</taxon>
        <taxon>Chordata</taxon>
        <taxon>Craniata</taxon>
        <taxon>Vertebrata</taxon>
        <taxon>Euteleostomi</taxon>
        <taxon>Amphibia</taxon>
        <taxon>Batrachia</taxon>
        <taxon>Anura</taxon>
        <taxon>Pipoidea</taxon>
        <taxon>Pipidae</taxon>
        <taxon>Xenopodinae</taxon>
        <taxon>Xenopus</taxon>
        <taxon>Xenopus</taxon>
    </lineage>
</organism>
<gene>
    <name type="primary">csn2</name>
</gene>
<comment type="function">
    <text evidence="1">Essential component of the COP9 signalosome complex (CSN), a complex involved in various cellular and developmental processes. The CSN complex is an essential regulator of the ubiquitin (Ubl) conjugation pathway by mediating the deneddylation of the cullin subunits of E3 ligase complexes, leading to modify the Ubl ligase activity (By similarity).</text>
</comment>
<comment type="subunit">
    <text evidence="2">Component of the CSN complex, probably composed of cops1, cops2, cops3, cops4, cops5, cops6, cops7, cops8 and cops9.</text>
</comment>
<comment type="subcellular location">
    <subcellularLocation>
        <location evidence="1">Cytoplasm</location>
    </subcellularLocation>
    <subcellularLocation>
        <location evidence="1">Nucleus</location>
    </subcellularLocation>
</comment>
<comment type="similarity">
    <text evidence="5">Belongs to the CSN2 family.</text>
</comment>